<organism>
    <name type="scientific">Homo sapiens</name>
    <name type="common">Human</name>
    <dbReference type="NCBI Taxonomy" id="9606"/>
    <lineage>
        <taxon>Eukaryota</taxon>
        <taxon>Metazoa</taxon>
        <taxon>Chordata</taxon>
        <taxon>Craniata</taxon>
        <taxon>Vertebrata</taxon>
        <taxon>Euteleostomi</taxon>
        <taxon>Mammalia</taxon>
        <taxon>Eutheria</taxon>
        <taxon>Euarchontoglires</taxon>
        <taxon>Primates</taxon>
        <taxon>Haplorrhini</taxon>
        <taxon>Catarrhini</taxon>
        <taxon>Hominidae</taxon>
        <taxon>Homo</taxon>
    </lineage>
</organism>
<accession>Q8TER5</accession>
<accession>A5PL07</accession>
<accession>Q9BWP5</accession>
<accession>Q9H7L6</accession>
<accession>Q9NTF9</accession>
<accession>Q9NW24</accession>
<gene>
    <name type="primary">ARHGEF40</name>
    <name type="synonym">SOLO</name>
</gene>
<feature type="chain" id="PRO_0000314822" description="Rho guanine nucleotide exchange factor 40">
    <location>
        <begin position="1"/>
        <end position="1519"/>
    </location>
</feature>
<feature type="domain" description="DH" evidence="3">
    <location>
        <begin position="1085"/>
        <end position="1253"/>
    </location>
</feature>
<feature type="domain" description="PH" evidence="4">
    <location>
        <begin position="1265"/>
        <end position="1372"/>
    </location>
</feature>
<feature type="region of interest" description="Disordered" evidence="5">
    <location>
        <begin position="194"/>
        <end position="237"/>
    </location>
</feature>
<feature type="region of interest" description="Disordered" evidence="5">
    <location>
        <begin position="253"/>
        <end position="503"/>
    </location>
</feature>
<feature type="region of interest" description="Disordered" evidence="5">
    <location>
        <begin position="955"/>
        <end position="1031"/>
    </location>
</feature>
<feature type="region of interest" description="Disordered" evidence="5">
    <location>
        <begin position="1466"/>
        <end position="1519"/>
    </location>
</feature>
<feature type="coiled-coil region" evidence="2">
    <location>
        <begin position="828"/>
        <end position="871"/>
    </location>
</feature>
<feature type="coiled-coil region" evidence="2">
    <location>
        <begin position="934"/>
        <end position="961"/>
    </location>
</feature>
<feature type="compositionally biased region" description="Pro residues" evidence="5">
    <location>
        <begin position="200"/>
        <end position="218"/>
    </location>
</feature>
<feature type="compositionally biased region" description="Basic residues" evidence="5">
    <location>
        <begin position="280"/>
        <end position="290"/>
    </location>
</feature>
<feature type="compositionally biased region" description="Low complexity" evidence="5">
    <location>
        <begin position="314"/>
        <end position="341"/>
    </location>
</feature>
<feature type="compositionally biased region" description="Gly residues" evidence="5">
    <location>
        <begin position="355"/>
        <end position="367"/>
    </location>
</feature>
<feature type="compositionally biased region" description="Basic residues" evidence="5">
    <location>
        <begin position="374"/>
        <end position="386"/>
    </location>
</feature>
<feature type="compositionally biased region" description="Basic and acidic residues" evidence="5">
    <location>
        <begin position="421"/>
        <end position="457"/>
    </location>
</feature>
<feature type="compositionally biased region" description="Low complexity" evidence="5">
    <location>
        <begin position="980"/>
        <end position="996"/>
    </location>
</feature>
<feature type="compositionally biased region" description="Polar residues" evidence="5">
    <location>
        <begin position="1467"/>
        <end position="1482"/>
    </location>
</feature>
<feature type="modified residue" description="Phosphoserine" evidence="14 17">
    <location>
        <position position="262"/>
    </location>
</feature>
<feature type="modified residue" description="Phosphothreonine" evidence="17">
    <location>
        <position position="371"/>
    </location>
</feature>
<feature type="modified residue" description="Phosphoserine" evidence="17">
    <location>
        <position position="419"/>
    </location>
</feature>
<feature type="modified residue" description="Phosphoserine" evidence="16">
    <location>
        <position position="931"/>
    </location>
</feature>
<feature type="modified residue" description="Phosphoserine" evidence="16">
    <location>
        <position position="961"/>
    </location>
</feature>
<feature type="modified residue" description="Phosphoserine" evidence="15">
    <location>
        <position position="1082"/>
    </location>
</feature>
<feature type="modified residue" description="Phosphoserine" evidence="17">
    <location>
        <position position="1433"/>
    </location>
</feature>
<feature type="modified residue" description="Phosphoserine" evidence="17">
    <location>
        <position position="1438"/>
    </location>
</feature>
<feature type="modified residue" description="Phosphoserine" evidence="17">
    <location>
        <position position="1474"/>
    </location>
</feature>
<feature type="modified residue" description="Phosphothreonine" evidence="16">
    <location>
        <position position="1492"/>
    </location>
</feature>
<feature type="splice variant" id="VSP_030381" description="In isoform 2." evidence="11">
    <location>
        <begin position="1"/>
        <end position="714"/>
    </location>
</feature>
<feature type="splice variant" id="VSP_030382" description="In isoform 3." evidence="12">
    <original>AARTRASVAVSSFEHAGPSLPGLSPGACSLPARVEEEAWDLDVKQISLAPETLDSSGDVSPGPRNSPSLQPPHPGSSTPTLASRGILGLSRQSHARALSDPTTPL</original>
    <variation>GEGQGAGGWPPGVKTLTMRIQRGGMVESQERHLVPKSVGLAGRPSVRLRVIPGSQEGFPTPAPHPPLPTLCSRPHPGLRGRVIL</variation>
    <location>
        <begin position="1415"/>
        <end position="1519"/>
    </location>
</feature>
<feature type="splice variant" id="VSP_030383" description="In isoform 4." evidence="10">
    <location>
        <begin position="1415"/>
        <end position="1462"/>
    </location>
</feature>
<feature type="sequence variant" id="VAR_038061" description="In dbSNP:rs7143633." evidence="6 9 16">
    <original>V</original>
    <variation>L</variation>
    <location>
        <position position="956"/>
    </location>
</feature>
<feature type="sequence variant" id="VAR_038062" description="In dbSNP:rs1958396." evidence="6 7 9">
    <original>L</original>
    <variation>S</variation>
    <location>
        <position position="1189"/>
    </location>
</feature>
<feature type="sequence variant" id="VAR_038063" description="In dbSNP:rs943992.">
    <original>M</original>
    <variation>T</variation>
    <location>
        <position position="1312"/>
    </location>
</feature>
<feature type="sequence variant" id="VAR_060541" description="In dbSNP:rs17855344." evidence="7">
    <original>T</original>
    <variation>P</variation>
    <location>
        <position position="1418"/>
    </location>
</feature>
<feature type="sequence conflict" description="In Ref. 1; BAB15753." evidence="13" ref="1">
    <original>K</original>
    <variation>E</variation>
    <location>
        <position position="293"/>
    </location>
</feature>
<comment type="function">
    <text evidence="1">May act as a guanine nucleotide exchange factor (GEF).</text>
</comment>
<comment type="interaction">
    <interactant intactId="EBI-10275150">
        <id>Q8TER5-2</id>
    </interactant>
    <interactant intactId="EBI-741724">
        <id>Q8NA61</id>
        <label>CBY2</label>
    </interactant>
    <organismsDiffer>false</organismsDiffer>
    <experiments>3</experiments>
</comment>
<comment type="interaction">
    <interactant intactId="EBI-10275150">
        <id>Q8TER5-2</id>
    </interactant>
    <interactant intactId="EBI-618655">
        <id>P81274</id>
        <label>GPSM2</label>
    </interactant>
    <organismsDiffer>false</organismsDiffer>
    <experiments>3</experiments>
</comment>
<comment type="subcellular location">
    <subcellularLocation>
        <location evidence="8">Cytoplasm</location>
    </subcellularLocation>
    <text>Concentrated in the perinuclear region.</text>
</comment>
<comment type="alternative products">
    <event type="alternative splicing"/>
    <isoform>
        <id>Q8TER5-1</id>
        <name>1</name>
        <sequence type="displayed"/>
    </isoform>
    <isoform>
        <id>Q8TER5-2</id>
        <name>2</name>
        <sequence type="described" ref="VSP_030381"/>
    </isoform>
    <isoform>
        <id>Q8TER5-3</id>
        <name>3</name>
        <sequence type="described" ref="VSP_030382"/>
    </isoform>
    <isoform>
        <id>Q8TER5-4</id>
        <name>4</name>
        <sequence type="described" ref="VSP_030383"/>
    </isoform>
</comment>
<comment type="tissue specificity">
    <text evidence="8">Expressed at higher level in the central nervous system and skeletal muscle and greater abundance in fetal than adult brain (at protein level).</text>
</comment>
<comment type="sequence caution" evidence="13">
    <conflict type="erroneous initiation">
        <sequence resource="EMBL-CDS" id="BAA91563"/>
    </conflict>
    <text>Truncated N-terminus.</text>
</comment>
<comment type="sequence caution" evidence="13">
    <conflict type="erroneous initiation">
        <sequence resource="EMBL-CDS" id="BAB15753"/>
    </conflict>
    <text>Extended N-terminus.</text>
</comment>
<comment type="sequence caution" evidence="13">
    <conflict type="erroneous initiation">
        <sequence resource="EMBL-CDS" id="BAB84883"/>
    </conflict>
    <text>Extended N-terminus.</text>
</comment>
<reference key="1">
    <citation type="journal article" date="2004" name="Nat. Genet.">
        <title>Complete sequencing and characterization of 21,243 full-length human cDNAs.</title>
        <authorList>
            <person name="Ota T."/>
            <person name="Suzuki Y."/>
            <person name="Nishikawa T."/>
            <person name="Otsuki T."/>
            <person name="Sugiyama T."/>
            <person name="Irie R."/>
            <person name="Wakamatsu A."/>
            <person name="Hayashi K."/>
            <person name="Sato H."/>
            <person name="Nagai K."/>
            <person name="Kimura K."/>
            <person name="Makita H."/>
            <person name="Sekine M."/>
            <person name="Obayashi M."/>
            <person name="Nishi T."/>
            <person name="Shibahara T."/>
            <person name="Tanaka T."/>
            <person name="Ishii S."/>
            <person name="Yamamoto J."/>
            <person name="Saito K."/>
            <person name="Kawai Y."/>
            <person name="Isono Y."/>
            <person name="Nakamura Y."/>
            <person name="Nagahari K."/>
            <person name="Murakami K."/>
            <person name="Yasuda T."/>
            <person name="Iwayanagi T."/>
            <person name="Wagatsuma M."/>
            <person name="Shiratori A."/>
            <person name="Sudo H."/>
            <person name="Hosoiri T."/>
            <person name="Kaku Y."/>
            <person name="Kodaira H."/>
            <person name="Kondo H."/>
            <person name="Sugawara M."/>
            <person name="Takahashi M."/>
            <person name="Kanda K."/>
            <person name="Yokoi T."/>
            <person name="Furuya T."/>
            <person name="Kikkawa E."/>
            <person name="Omura Y."/>
            <person name="Abe K."/>
            <person name="Kamihara K."/>
            <person name="Katsuta N."/>
            <person name="Sato K."/>
            <person name="Tanikawa M."/>
            <person name="Yamazaki M."/>
            <person name="Ninomiya K."/>
            <person name="Ishibashi T."/>
            <person name="Yamashita H."/>
            <person name="Murakawa K."/>
            <person name="Fujimori K."/>
            <person name="Tanai H."/>
            <person name="Kimata M."/>
            <person name="Watanabe M."/>
            <person name="Hiraoka S."/>
            <person name="Chiba Y."/>
            <person name="Ishida S."/>
            <person name="Ono Y."/>
            <person name="Takiguchi S."/>
            <person name="Watanabe S."/>
            <person name="Yosida M."/>
            <person name="Hotuta T."/>
            <person name="Kusano J."/>
            <person name="Kanehori K."/>
            <person name="Takahashi-Fujii A."/>
            <person name="Hara H."/>
            <person name="Tanase T.-O."/>
            <person name="Nomura Y."/>
            <person name="Togiya S."/>
            <person name="Komai F."/>
            <person name="Hara R."/>
            <person name="Takeuchi K."/>
            <person name="Arita M."/>
            <person name="Imose N."/>
            <person name="Musashino K."/>
            <person name="Yuuki H."/>
            <person name="Oshima A."/>
            <person name="Sasaki N."/>
            <person name="Aotsuka S."/>
            <person name="Yoshikawa Y."/>
            <person name="Matsunawa H."/>
            <person name="Ichihara T."/>
            <person name="Shiohata N."/>
            <person name="Sano S."/>
            <person name="Moriya S."/>
            <person name="Momiyama H."/>
            <person name="Satoh N."/>
            <person name="Takami S."/>
            <person name="Terashima Y."/>
            <person name="Suzuki O."/>
            <person name="Nakagawa S."/>
            <person name="Senoh A."/>
            <person name="Mizoguchi H."/>
            <person name="Goto Y."/>
            <person name="Shimizu F."/>
            <person name="Wakebe H."/>
            <person name="Hishigaki H."/>
            <person name="Watanabe T."/>
            <person name="Sugiyama A."/>
            <person name="Takemoto M."/>
            <person name="Kawakami B."/>
            <person name="Yamazaki M."/>
            <person name="Watanabe K."/>
            <person name="Kumagai A."/>
            <person name="Itakura S."/>
            <person name="Fukuzumi Y."/>
            <person name="Fujimori Y."/>
            <person name="Komiyama M."/>
            <person name="Tashiro H."/>
            <person name="Tanigami A."/>
            <person name="Fujiwara T."/>
            <person name="Ono T."/>
            <person name="Yamada K."/>
            <person name="Fujii Y."/>
            <person name="Ozaki K."/>
            <person name="Hirao M."/>
            <person name="Ohmori Y."/>
            <person name="Kawabata A."/>
            <person name="Hikiji T."/>
            <person name="Kobatake N."/>
            <person name="Inagaki H."/>
            <person name="Ikema Y."/>
            <person name="Okamoto S."/>
            <person name="Okitani R."/>
            <person name="Kawakami T."/>
            <person name="Noguchi S."/>
            <person name="Itoh T."/>
            <person name="Shigeta K."/>
            <person name="Senba T."/>
            <person name="Matsumura K."/>
            <person name="Nakajima Y."/>
            <person name="Mizuno T."/>
            <person name="Morinaga M."/>
            <person name="Sasaki M."/>
            <person name="Togashi T."/>
            <person name="Oyama M."/>
            <person name="Hata H."/>
            <person name="Watanabe M."/>
            <person name="Komatsu T."/>
            <person name="Mizushima-Sugano J."/>
            <person name="Satoh T."/>
            <person name="Shirai Y."/>
            <person name="Takahashi Y."/>
            <person name="Nakagawa K."/>
            <person name="Okumura K."/>
            <person name="Nagase T."/>
            <person name="Nomura N."/>
            <person name="Kikuchi H."/>
            <person name="Masuho Y."/>
            <person name="Yamashita R."/>
            <person name="Nakai K."/>
            <person name="Yada T."/>
            <person name="Nakamura Y."/>
            <person name="Ohara O."/>
            <person name="Isogai T."/>
            <person name="Sugano S."/>
        </authorList>
    </citation>
    <scope>NUCLEOTIDE SEQUENCE [LARGE SCALE MRNA] (ISOFORM 1)</scope>
    <scope>NUCLEOTIDE SEQUENCE [LARGE SCALE MRNA] OF 1172-1519 (ISOFORM 4)</scope>
    <scope>VARIANTS LEU-956 AND SER-1189</scope>
    <source>
        <tissue>Spleen</tissue>
        <tissue>Teratocarcinoma</tissue>
    </source>
</reference>
<reference key="2">
    <citation type="journal article" date="2003" name="Nature">
        <title>The DNA sequence and analysis of human chromosome 14.</title>
        <authorList>
            <person name="Heilig R."/>
            <person name="Eckenberg R."/>
            <person name="Petit J.-L."/>
            <person name="Fonknechten N."/>
            <person name="Da Silva C."/>
            <person name="Cattolico L."/>
            <person name="Levy M."/>
            <person name="Barbe V."/>
            <person name="De Berardinis V."/>
            <person name="Ureta-Vidal A."/>
            <person name="Pelletier E."/>
            <person name="Vico V."/>
            <person name="Anthouard V."/>
            <person name="Rowen L."/>
            <person name="Madan A."/>
            <person name="Qin S."/>
            <person name="Sun H."/>
            <person name="Du H."/>
            <person name="Pepin K."/>
            <person name="Artiguenave F."/>
            <person name="Robert C."/>
            <person name="Cruaud C."/>
            <person name="Bruels T."/>
            <person name="Jaillon O."/>
            <person name="Friedlander L."/>
            <person name="Samson G."/>
            <person name="Brottier P."/>
            <person name="Cure S."/>
            <person name="Segurens B."/>
            <person name="Aniere F."/>
            <person name="Samain S."/>
            <person name="Crespeau H."/>
            <person name="Abbasi N."/>
            <person name="Aiach N."/>
            <person name="Boscus D."/>
            <person name="Dickhoff R."/>
            <person name="Dors M."/>
            <person name="Dubois I."/>
            <person name="Friedman C."/>
            <person name="Gouyvenoux M."/>
            <person name="James R."/>
            <person name="Madan A."/>
            <person name="Mairey-Estrada B."/>
            <person name="Mangenot S."/>
            <person name="Martins N."/>
            <person name="Menard M."/>
            <person name="Oztas S."/>
            <person name="Ratcliffe A."/>
            <person name="Shaffer T."/>
            <person name="Trask B."/>
            <person name="Vacherie B."/>
            <person name="Bellemere C."/>
            <person name="Belser C."/>
            <person name="Besnard-Gonnet M."/>
            <person name="Bartol-Mavel D."/>
            <person name="Boutard M."/>
            <person name="Briez-Silla S."/>
            <person name="Combette S."/>
            <person name="Dufosse-Laurent V."/>
            <person name="Ferron C."/>
            <person name="Lechaplais C."/>
            <person name="Louesse C."/>
            <person name="Muselet D."/>
            <person name="Magdelenat G."/>
            <person name="Pateau E."/>
            <person name="Petit E."/>
            <person name="Sirvain-Trukniewicz P."/>
            <person name="Trybou A."/>
            <person name="Vega-Czarny N."/>
            <person name="Bataille E."/>
            <person name="Bluet E."/>
            <person name="Bordelais I."/>
            <person name="Dubois M."/>
            <person name="Dumont C."/>
            <person name="Guerin T."/>
            <person name="Haffray S."/>
            <person name="Hammadi R."/>
            <person name="Muanga J."/>
            <person name="Pellouin V."/>
            <person name="Robert D."/>
            <person name="Wunderle E."/>
            <person name="Gauguet G."/>
            <person name="Roy A."/>
            <person name="Sainte-Marthe L."/>
            <person name="Verdier J."/>
            <person name="Verdier-Discala C."/>
            <person name="Hillier L.W."/>
            <person name="Fulton L."/>
            <person name="McPherson J."/>
            <person name="Matsuda F."/>
            <person name="Wilson R."/>
            <person name="Scarpelli C."/>
            <person name="Gyapay G."/>
            <person name="Wincker P."/>
            <person name="Saurin W."/>
            <person name="Quetier F."/>
            <person name="Waterston R."/>
            <person name="Hood L."/>
            <person name="Weissenbach J."/>
        </authorList>
    </citation>
    <scope>NUCLEOTIDE SEQUENCE [LARGE SCALE GENOMIC DNA]</scope>
</reference>
<reference key="3">
    <citation type="journal article" date="2004" name="Genome Res.">
        <title>The status, quality, and expansion of the NIH full-length cDNA project: the Mammalian Gene Collection (MGC).</title>
        <authorList>
            <consortium name="The MGC Project Team"/>
        </authorList>
    </citation>
    <scope>NUCLEOTIDE SEQUENCE [LARGE SCALE MRNA] (ISOFORM 2)</scope>
    <scope>VARIANTS SER-1189 AND PRO-1418</scope>
    <source>
        <tissue>Kidney</tissue>
    </source>
</reference>
<reference key="4">
    <citation type="journal article" date="2007" name="BMC Genomics">
        <title>The full-ORF clone resource of the German cDNA consortium.</title>
        <authorList>
            <person name="Bechtel S."/>
            <person name="Rosenfelder H."/>
            <person name="Duda A."/>
            <person name="Schmidt C.P."/>
            <person name="Ernst U."/>
            <person name="Wellenreuther R."/>
            <person name="Mehrle A."/>
            <person name="Schuster C."/>
            <person name="Bahr A."/>
            <person name="Bloecker H."/>
            <person name="Heubner D."/>
            <person name="Hoerlein A."/>
            <person name="Michel G."/>
            <person name="Wedler H."/>
            <person name="Koehrer K."/>
            <person name="Ottenwaelder B."/>
            <person name="Poustka A."/>
            <person name="Wiemann S."/>
            <person name="Schupp I."/>
        </authorList>
    </citation>
    <scope>NUCLEOTIDE SEQUENCE [LARGE SCALE MRNA] OF 841-1519 (ISOFORM 3)</scope>
    <scope>VARIANTS LEU-956 AND SER-1189</scope>
    <source>
        <tissue>Testis</tissue>
    </source>
</reference>
<reference key="5">
    <citation type="journal article" date="2005" name="Gene">
        <title>Identification, expression analysis, genomic organization and cellular location of a novel protein with a RhoGEF domain.</title>
        <authorList>
            <person name="Tse S.-W."/>
            <person name="Broderick J.A."/>
            <person name="Wei M.-L."/>
            <person name="Luo M.-H."/>
            <person name="Smith D."/>
            <person name="McCaffery P."/>
            <person name="Stamm S."/>
            <person name="Andreadis A."/>
        </authorList>
    </citation>
    <scope>SUBCELLULAR LOCATION</scope>
    <scope>TISSUE SPECIFICITY</scope>
</reference>
<reference key="6">
    <citation type="journal article" date="2006" name="Nat. Biotechnol.">
        <title>A probability-based approach for high-throughput protein phosphorylation analysis and site localization.</title>
        <authorList>
            <person name="Beausoleil S.A."/>
            <person name="Villen J."/>
            <person name="Gerber S.A."/>
            <person name="Rush J."/>
            <person name="Gygi S.P."/>
        </authorList>
    </citation>
    <scope>IDENTIFICATION BY MASS SPECTROMETRY [LARGE SCALE ANALYSIS]</scope>
    <source>
        <tissue>Cervix carcinoma</tissue>
    </source>
</reference>
<reference key="7">
    <citation type="journal article" date="2008" name="Proc. Natl. Acad. Sci. U.S.A.">
        <title>A quantitative atlas of mitotic phosphorylation.</title>
        <authorList>
            <person name="Dephoure N."/>
            <person name="Zhou C."/>
            <person name="Villen J."/>
            <person name="Beausoleil S.A."/>
            <person name="Bakalarski C.E."/>
            <person name="Elledge S.J."/>
            <person name="Gygi S.P."/>
        </authorList>
    </citation>
    <scope>IDENTIFICATION BY MASS SPECTROMETRY [LARGE SCALE ANALYSIS]</scope>
    <source>
        <tissue>Cervix carcinoma</tissue>
    </source>
</reference>
<reference key="8">
    <citation type="journal article" date="2009" name="Anal. Chem.">
        <title>Lys-N and trypsin cover complementary parts of the phosphoproteome in a refined SCX-based approach.</title>
        <authorList>
            <person name="Gauci S."/>
            <person name="Helbig A.O."/>
            <person name="Slijper M."/>
            <person name="Krijgsveld J."/>
            <person name="Heck A.J."/>
            <person name="Mohammed S."/>
        </authorList>
    </citation>
    <scope>IDENTIFICATION BY MASS SPECTROMETRY [LARGE SCALE ANALYSIS]</scope>
</reference>
<reference key="9">
    <citation type="journal article" date="2009" name="Mol. Cell. Proteomics">
        <title>Large-scale proteomics analysis of the human kinome.</title>
        <authorList>
            <person name="Oppermann F.S."/>
            <person name="Gnad F."/>
            <person name="Olsen J.V."/>
            <person name="Hornberger R."/>
            <person name="Greff Z."/>
            <person name="Keri G."/>
            <person name="Mann M."/>
            <person name="Daub H."/>
        </authorList>
    </citation>
    <scope>PHOSPHORYLATION [LARGE SCALE ANALYSIS] AT SER-262</scope>
    <scope>IDENTIFICATION BY MASS SPECTROMETRY [LARGE SCALE ANALYSIS]</scope>
</reference>
<reference key="10">
    <citation type="journal article" date="2011" name="Sci. Signal.">
        <title>System-wide temporal characterization of the proteome and phosphoproteome of human embryonic stem cell differentiation.</title>
        <authorList>
            <person name="Rigbolt K.T."/>
            <person name="Prokhorova T.A."/>
            <person name="Akimov V."/>
            <person name="Henningsen J."/>
            <person name="Johansen P.T."/>
            <person name="Kratchmarova I."/>
            <person name="Kassem M."/>
            <person name="Mann M."/>
            <person name="Olsen J.V."/>
            <person name="Blagoev B."/>
        </authorList>
    </citation>
    <scope>PHOSPHORYLATION [LARGE SCALE ANALYSIS] AT SER-1082</scope>
    <scope>IDENTIFICATION BY MASS SPECTROMETRY [LARGE SCALE ANALYSIS]</scope>
</reference>
<reference key="11">
    <citation type="journal article" date="2013" name="J. Proteome Res.">
        <title>Toward a comprehensive characterization of a human cancer cell phosphoproteome.</title>
        <authorList>
            <person name="Zhou H."/>
            <person name="Di Palma S."/>
            <person name="Preisinger C."/>
            <person name="Peng M."/>
            <person name="Polat A.N."/>
            <person name="Heck A.J."/>
            <person name="Mohammed S."/>
        </authorList>
    </citation>
    <scope>PHOSPHORYLATION [LARGE SCALE ANALYSIS] AT SER-931; SER-961 AND THR-1492</scope>
    <scope>VARIANT [LARGE SCALE ANALYSIS] LEU-956</scope>
    <scope>IDENTIFICATION BY MASS SPECTROMETRY [LARGE SCALE ANALYSIS]</scope>
    <source>
        <tissue>Cervix carcinoma</tissue>
        <tissue>Erythroleukemia</tissue>
    </source>
</reference>
<reference key="12">
    <citation type="journal article" date="2014" name="J. Proteomics">
        <title>An enzyme assisted RP-RPLC approach for in-depth analysis of human liver phosphoproteome.</title>
        <authorList>
            <person name="Bian Y."/>
            <person name="Song C."/>
            <person name="Cheng K."/>
            <person name="Dong M."/>
            <person name="Wang F."/>
            <person name="Huang J."/>
            <person name="Sun D."/>
            <person name="Wang L."/>
            <person name="Ye M."/>
            <person name="Zou H."/>
        </authorList>
    </citation>
    <scope>PHOSPHORYLATION [LARGE SCALE ANALYSIS] AT SER-262; THR-371; SER-419; SER-1433; SER-1438 AND SER-1474</scope>
    <scope>IDENTIFICATION BY MASS SPECTROMETRY [LARGE SCALE ANALYSIS]</scope>
    <source>
        <tissue>Liver</tissue>
    </source>
</reference>
<keyword id="KW-0025">Alternative splicing</keyword>
<keyword id="KW-0175">Coiled coil</keyword>
<keyword id="KW-0963">Cytoplasm</keyword>
<keyword id="KW-0344">Guanine-nucleotide releasing factor</keyword>
<keyword id="KW-0597">Phosphoprotein</keyword>
<keyword id="KW-1267">Proteomics identification</keyword>
<keyword id="KW-1185">Reference proteome</keyword>
<evidence type="ECO:0000250" key="1"/>
<evidence type="ECO:0000255" key="2"/>
<evidence type="ECO:0000255" key="3">
    <source>
        <dbReference type="PROSITE-ProRule" id="PRU00062"/>
    </source>
</evidence>
<evidence type="ECO:0000255" key="4">
    <source>
        <dbReference type="PROSITE-ProRule" id="PRU00145"/>
    </source>
</evidence>
<evidence type="ECO:0000256" key="5">
    <source>
        <dbReference type="SAM" id="MobiDB-lite"/>
    </source>
</evidence>
<evidence type="ECO:0000269" key="6">
    <source>
    </source>
</evidence>
<evidence type="ECO:0000269" key="7">
    <source>
    </source>
</evidence>
<evidence type="ECO:0000269" key="8">
    <source>
    </source>
</evidence>
<evidence type="ECO:0000269" key="9">
    <source>
    </source>
</evidence>
<evidence type="ECO:0000303" key="10">
    <source>
    </source>
</evidence>
<evidence type="ECO:0000303" key="11">
    <source>
    </source>
</evidence>
<evidence type="ECO:0000303" key="12">
    <source>
    </source>
</evidence>
<evidence type="ECO:0000305" key="13"/>
<evidence type="ECO:0007744" key="14">
    <source>
    </source>
</evidence>
<evidence type="ECO:0007744" key="15">
    <source>
    </source>
</evidence>
<evidence type="ECO:0007744" key="16">
    <source>
    </source>
</evidence>
<evidence type="ECO:0007744" key="17">
    <source>
    </source>
</evidence>
<name>ARH40_HUMAN</name>
<proteinExistence type="evidence at protein level"/>
<sequence length="1519" mass="164658">MEPEPVEDCVQSTLAALYPPFEATAPTLLGQVFQVVERTYREDALRYTLDFLVPAKHLLAKVQQEACAQYSGFLFFHEGWPLCLHEQVVVQLAALPWQLLRPGDFYLQVVPSAAQAPRLALKCLAPGGGRVQEVPVPNEACAYLFTPEWLQGINKDRPTGRLSTCLLSAPSGIQRLPWAELICPRFVHKEGLMVGHQPSTLPPELPSGPPGLPSPPLPEEALGTRSPGDGHNAPVEGPEGEYVELLEVTLPVRGSPTDAEGSPGLSRVRTVPTRKGAGGKGRHRRHRAWMHQKGLGPRGQDGARPPGEGSSTGASPESPPGAEAVPEAAVLEVSEPPAEAVGEASGSCPLRPGELRGGGGGGQGAEGPPGTPRRTGKGNRRKKRAAGRGALSRGGDSAPLSPGDKEDASHQEALGNLPSPSEHKLPECHLVKEEYEGSGKPESEPKELKTAGEKEPQLSEACGPTEEGAGERELEGPGLLCMAGHTGPEGPLSDTPTPPLETVQEGKGDNIPEEALAVSVSDHPDVAWDLMASGFLILTGGVDQSGRALLTITPPCPPEEPPPSRDTLNTTLHYLHSLLRPDLQTLGLSVLLDLRQAPPLPPALIPALSQLQDSGDPPLVQRLLILIHDDLPTELCGFQGAEVLSENDLKRVAKPEELQWELGGHRDPSPSHWVEIHQEVVRLCRLCQGVLGSVRQAIEELEGAAEPEEEEAVGMPKPLQKVLADPRLTALQRDGGAILMRLRSTPSSKLEGQGPATLYQEVDEAIHQLVRLSNLHVQQQEQRQCLRRLQQVLQWLSGPGEEQLASFAMPGDTLSALQETELRFRAFSAEVQERLAQAREALALEENATSQKVLDIFEQRLEQVESGLHRALRLQRFFQQAHEWVDEGFARLAGAGPGREAVLAALALRRAPEPSAGTFQEMRALALDLGSPAALREWGRCQARCQELERRIQQHVGEEASPRGYRRRRADGASSGGAQWGPRSPSPSLSSLLLPSSPGPRPAPSHCSLAPCGEDYEEEGPELAPEAEGRPPRAVLIRGLEVTSTEVVDRTCSPREHVLLGRARGPDGPWGVGTPRMERKRSISAQQRLVSELIACEQDYVATLSEPVPPPGPELTPELRGTWAAALSARERLRSFHRTHFLRELQGCATHPLRIGACFLRHGDQFSLYAQYVKHRHKLENGLAALSPLSKGSMEAGPYLPRALQQPLEQLTRYGRLLEELLREAGPELSSECRALGAAVQLLREQEARGRDLLAVEAVRGCEIDLKEQGQLLHRDPFTVICGRKKCLRHVFLFEHLLLFSKLKGPEGGSEMFVYKQAFKTADMGLTENIGDSGLCFELWFRRRRAREAYTLQATSPEIKLKWTSSIAQLLWRQAAHNKELRVQQMVSMGIGNKPFLDIKALGERTLSALLTGRAARTRASVAVSSFEHAGPSLPGLSPGACSLPARVEEEAWDLDVKQISLAPETLDSSGDVSPGPRNSPSLQPPHPGSSTPTLASRGILGLSRQSHARALSDPTTPL</sequence>
<dbReference type="EMBL" id="AK001219">
    <property type="protein sequence ID" value="BAA91563.1"/>
    <property type="status" value="ALT_INIT"/>
    <property type="molecule type" value="mRNA"/>
</dbReference>
<dbReference type="EMBL" id="AK024463">
    <property type="protein sequence ID" value="BAB15753.1"/>
    <property type="status" value="ALT_INIT"/>
    <property type="molecule type" value="mRNA"/>
</dbReference>
<dbReference type="EMBL" id="AK074057">
    <property type="protein sequence ID" value="BAB84883.1"/>
    <property type="status" value="ALT_INIT"/>
    <property type="molecule type" value="mRNA"/>
</dbReference>
<dbReference type="EMBL" id="AL161668">
    <property type="status" value="NOT_ANNOTATED_CDS"/>
    <property type="molecule type" value="Genomic_DNA"/>
</dbReference>
<dbReference type="EMBL" id="BC000084">
    <property type="protein sequence ID" value="AAH00084.4"/>
    <property type="molecule type" value="mRNA"/>
</dbReference>
<dbReference type="EMBL" id="BC142692">
    <property type="protein sequence ID" value="AAI42693.1"/>
    <property type="molecule type" value="mRNA"/>
</dbReference>
<dbReference type="EMBL" id="AL137291">
    <property type="protein sequence ID" value="CAB70682.1"/>
    <property type="molecule type" value="mRNA"/>
</dbReference>
<dbReference type="CCDS" id="CCDS32041.1">
    <molecule id="Q8TER5-1"/>
</dbReference>
<dbReference type="PIR" id="T46359">
    <property type="entry name" value="T46359"/>
</dbReference>
<dbReference type="RefSeq" id="NP_001265458.1">
    <molecule id="Q8TER5-2"/>
    <property type="nucleotide sequence ID" value="NM_001278529.2"/>
</dbReference>
<dbReference type="RefSeq" id="NP_060541.3">
    <molecule id="Q8TER5-1"/>
    <property type="nucleotide sequence ID" value="NM_018071.4"/>
</dbReference>
<dbReference type="RefSeq" id="XP_005267901.1">
    <molecule id="Q8TER5-4"/>
    <property type="nucleotide sequence ID" value="XM_005267844.4"/>
</dbReference>
<dbReference type="SMR" id="Q8TER5"/>
<dbReference type="BioGRID" id="120826">
    <property type="interactions" value="66"/>
</dbReference>
<dbReference type="FunCoup" id="Q8TER5">
    <property type="interactions" value="706"/>
</dbReference>
<dbReference type="IntAct" id="Q8TER5">
    <property type="interactions" value="43"/>
</dbReference>
<dbReference type="STRING" id="9606.ENSP00000298694"/>
<dbReference type="GlyGen" id="Q8TER5">
    <property type="glycosylation" value="2 sites"/>
</dbReference>
<dbReference type="iPTMnet" id="Q8TER5"/>
<dbReference type="PhosphoSitePlus" id="Q8TER5"/>
<dbReference type="BioMuta" id="ARHGEF40"/>
<dbReference type="DMDM" id="296452953"/>
<dbReference type="jPOST" id="Q8TER5"/>
<dbReference type="MassIVE" id="Q8TER5"/>
<dbReference type="PaxDb" id="9606-ENSP00000298694"/>
<dbReference type="PeptideAtlas" id="Q8TER5"/>
<dbReference type="ProteomicsDB" id="74485">
    <molecule id="Q8TER5-1"/>
</dbReference>
<dbReference type="ProteomicsDB" id="74486">
    <molecule id="Q8TER5-2"/>
</dbReference>
<dbReference type="ProteomicsDB" id="74487">
    <molecule id="Q8TER5-3"/>
</dbReference>
<dbReference type="ProteomicsDB" id="74488">
    <molecule id="Q8TER5-4"/>
</dbReference>
<dbReference type="Pumba" id="Q8TER5"/>
<dbReference type="Antibodypedia" id="22091">
    <property type="antibodies" value="36 antibodies from 13 providers"/>
</dbReference>
<dbReference type="DNASU" id="55701"/>
<dbReference type="Ensembl" id="ENST00000298694.9">
    <molecule id="Q8TER5-1"/>
    <property type="protein sequence ID" value="ENSP00000298694.4"/>
    <property type="gene ID" value="ENSG00000165801.10"/>
</dbReference>
<dbReference type="GeneID" id="55701"/>
<dbReference type="KEGG" id="hsa:55701"/>
<dbReference type="MANE-Select" id="ENST00000298694.9">
    <property type="protein sequence ID" value="ENSP00000298694.4"/>
    <property type="RefSeq nucleotide sequence ID" value="NM_018071.5"/>
    <property type="RefSeq protein sequence ID" value="NP_060541.3"/>
</dbReference>
<dbReference type="UCSC" id="uc001vzp.5">
    <molecule id="Q8TER5-1"/>
    <property type="organism name" value="human"/>
</dbReference>
<dbReference type="AGR" id="HGNC:25516"/>
<dbReference type="CTD" id="55701"/>
<dbReference type="DisGeNET" id="55701"/>
<dbReference type="GeneCards" id="ARHGEF40"/>
<dbReference type="HGNC" id="HGNC:25516">
    <property type="gene designation" value="ARHGEF40"/>
</dbReference>
<dbReference type="HPA" id="ENSG00000165801">
    <property type="expression patterns" value="Low tissue specificity"/>
</dbReference>
<dbReference type="MIM" id="610018">
    <property type="type" value="gene"/>
</dbReference>
<dbReference type="neXtProt" id="NX_Q8TER5"/>
<dbReference type="OpenTargets" id="ENSG00000165801"/>
<dbReference type="VEuPathDB" id="HostDB:ENSG00000165801"/>
<dbReference type="eggNOG" id="KOG0689">
    <property type="taxonomic scope" value="Eukaryota"/>
</dbReference>
<dbReference type="GeneTree" id="ENSGT00940000161599"/>
<dbReference type="HOGENOM" id="CLU_001356_2_1_1"/>
<dbReference type="InParanoid" id="Q8TER5"/>
<dbReference type="OMA" id="CMAGPTG"/>
<dbReference type="OrthoDB" id="6152532at2759"/>
<dbReference type="PAN-GO" id="Q8TER5">
    <property type="GO annotations" value="0 GO annotations based on evolutionary models"/>
</dbReference>
<dbReference type="PhylomeDB" id="Q8TER5"/>
<dbReference type="TreeFam" id="TF334329"/>
<dbReference type="PathwayCommons" id="Q8TER5"/>
<dbReference type="Reactome" id="R-HSA-193648">
    <property type="pathway name" value="NRAGE signals death through JNK"/>
</dbReference>
<dbReference type="Reactome" id="R-HSA-416482">
    <property type="pathway name" value="G alpha (12/13) signalling events"/>
</dbReference>
<dbReference type="Reactome" id="R-HSA-8980692">
    <property type="pathway name" value="RHOA GTPase cycle"/>
</dbReference>
<dbReference type="Reactome" id="R-HSA-9013106">
    <property type="pathway name" value="RHOC GTPase cycle"/>
</dbReference>
<dbReference type="SignaLink" id="Q8TER5"/>
<dbReference type="BioGRID-ORCS" id="55701">
    <property type="hits" value="8 hits in 1147 CRISPR screens"/>
</dbReference>
<dbReference type="ChiTaRS" id="ARHGEF40">
    <property type="organism name" value="human"/>
</dbReference>
<dbReference type="GenomeRNAi" id="55701"/>
<dbReference type="Pharos" id="Q8TER5">
    <property type="development level" value="Tdark"/>
</dbReference>
<dbReference type="PRO" id="PR:Q8TER5"/>
<dbReference type="Proteomes" id="UP000005640">
    <property type="component" value="Chromosome 14"/>
</dbReference>
<dbReference type="RNAct" id="Q8TER5">
    <property type="molecule type" value="protein"/>
</dbReference>
<dbReference type="Bgee" id="ENSG00000165801">
    <property type="expression patterns" value="Expressed in buccal mucosa cell and 196 other cell types or tissues"/>
</dbReference>
<dbReference type="ExpressionAtlas" id="Q8TER5">
    <property type="expression patterns" value="baseline and differential"/>
</dbReference>
<dbReference type="GO" id="GO:0005737">
    <property type="term" value="C:cytoplasm"/>
    <property type="evidence" value="ECO:0000318"/>
    <property type="project" value="GO_Central"/>
</dbReference>
<dbReference type="GO" id="GO:0005829">
    <property type="term" value="C:cytosol"/>
    <property type="evidence" value="ECO:0000314"/>
    <property type="project" value="HPA"/>
</dbReference>
<dbReference type="GO" id="GO:0019898">
    <property type="term" value="C:extrinsic component of membrane"/>
    <property type="evidence" value="ECO:0000318"/>
    <property type="project" value="GO_Central"/>
</dbReference>
<dbReference type="GO" id="GO:0005886">
    <property type="term" value="C:plasma membrane"/>
    <property type="evidence" value="ECO:0000314"/>
    <property type="project" value="HPA"/>
</dbReference>
<dbReference type="GO" id="GO:0005085">
    <property type="term" value="F:guanyl-nucleotide exchange factor activity"/>
    <property type="evidence" value="ECO:0000318"/>
    <property type="project" value="GO_Central"/>
</dbReference>
<dbReference type="GO" id="GO:0007411">
    <property type="term" value="P:axon guidance"/>
    <property type="evidence" value="ECO:0000318"/>
    <property type="project" value="GO_Central"/>
</dbReference>
<dbReference type="GO" id="GO:0051056">
    <property type="term" value="P:regulation of small GTPase mediated signal transduction"/>
    <property type="evidence" value="ECO:0000304"/>
    <property type="project" value="Reactome"/>
</dbReference>
<dbReference type="CDD" id="cd13242">
    <property type="entry name" value="PH_puratrophin-1"/>
    <property type="match status" value="1"/>
</dbReference>
<dbReference type="Gene3D" id="1.20.900.10">
    <property type="entry name" value="Dbl homology (DH) domain"/>
    <property type="match status" value="1"/>
</dbReference>
<dbReference type="Gene3D" id="2.30.29.30">
    <property type="entry name" value="Pleckstrin-homology domain (PH domain)/Phosphotyrosine-binding domain (PTB)"/>
    <property type="match status" value="1"/>
</dbReference>
<dbReference type="InterPro" id="IPR035899">
    <property type="entry name" value="DBL_dom_sf"/>
</dbReference>
<dbReference type="InterPro" id="IPR000219">
    <property type="entry name" value="DH_dom"/>
</dbReference>
<dbReference type="InterPro" id="IPR011993">
    <property type="entry name" value="PH-like_dom_sf"/>
</dbReference>
<dbReference type="InterPro" id="IPR001849">
    <property type="entry name" value="PH_domain"/>
</dbReference>
<dbReference type="InterPro" id="IPR052231">
    <property type="entry name" value="Rho_GEF_signaling-related"/>
</dbReference>
<dbReference type="InterPro" id="IPR055251">
    <property type="entry name" value="SOS1_NGEF_PH"/>
</dbReference>
<dbReference type="PANTHER" id="PTHR45845:SF5">
    <property type="entry name" value="RHO GUANINE NUCLEOTIDE EXCHANGE FACTOR 40"/>
    <property type="match status" value="1"/>
</dbReference>
<dbReference type="PANTHER" id="PTHR45845">
    <property type="entry name" value="RHO GUANINE NUCLEOTIDE EXCHANGE FACTOR-RELATED"/>
    <property type="match status" value="1"/>
</dbReference>
<dbReference type="Pfam" id="PF00621">
    <property type="entry name" value="RhoGEF"/>
    <property type="match status" value="1"/>
</dbReference>
<dbReference type="Pfam" id="PF22697">
    <property type="entry name" value="SOS1_NGEF_PH"/>
    <property type="match status" value="1"/>
</dbReference>
<dbReference type="SMART" id="SM00233">
    <property type="entry name" value="PH"/>
    <property type="match status" value="1"/>
</dbReference>
<dbReference type="SUPFAM" id="SSF48065">
    <property type="entry name" value="DBL homology domain (DH-domain)"/>
    <property type="match status" value="1"/>
</dbReference>
<dbReference type="SUPFAM" id="SSF50729">
    <property type="entry name" value="PH domain-like"/>
    <property type="match status" value="1"/>
</dbReference>
<dbReference type="PROSITE" id="PS50010">
    <property type="entry name" value="DH_2"/>
    <property type="match status" value="1"/>
</dbReference>
<dbReference type="PROSITE" id="PS50003">
    <property type="entry name" value="PH_DOMAIN"/>
    <property type="match status" value="1"/>
</dbReference>
<protein>
    <recommendedName>
        <fullName>Rho guanine nucleotide exchange factor 40</fullName>
    </recommendedName>
    <alternativeName>
        <fullName>Protein SOLO</fullName>
    </alternativeName>
</protein>